<evidence type="ECO:0000250" key="1">
    <source>
        <dbReference type="UniProtKB" id="P0DX54"/>
    </source>
</evidence>
<evidence type="ECO:0000250" key="2">
    <source>
        <dbReference type="UniProtKB" id="P24173"/>
    </source>
</evidence>
<evidence type="ECO:0000269" key="3">
    <source>
    </source>
</evidence>
<evidence type="ECO:0000303" key="4">
    <source>
    </source>
</evidence>
<evidence type="ECO:0000305" key="5"/>
<evidence type="ECO:0000312" key="6">
    <source>
        <dbReference type="EMBL" id="AAG08396.1"/>
    </source>
</evidence>
<sequence length="355" mass="39747">MRVLLVKTSSLGDVIHTLPALTDAARAIPGIQFDWVVEEGFAEIPAWHPAVARVIPVAIRRWRKNLWQTLRNGEWRRFKQRLKEVDYDLVIDAQGLLKSAWLTRYVGKTPVAGLDRDSAREPLASRFYRRAYPVAWGQHAVERTRQLFAQALDYPLPESVGDYGLDREQLADADPGAPYLVFLHGTTWVTKHWPEAYWRELAERMCERGWSVRLPWGSAAERERAGRLAAGLENAAVLPRLSLAGMAKVLAGARACVAVDTGLGHLAAALDVPTLSLFGPTNPGFTGAYGRSQVHLGSDFPCAPCLKKTCTYQPTEEDRKLFDLKREQPLCFTRLNPQRVATQLEAMLLAPETLR</sequence>
<gene>
    <name evidence="4" type="primary">waaC</name>
    <name evidence="4" type="synonym">rfaC</name>
    <name evidence="6" type="ordered locus">PA5011</name>
</gene>
<dbReference type="EC" id="2.4.99.23" evidence="2"/>
<dbReference type="EMBL" id="U70982">
    <property type="protein sequence ID" value="AAC45365.1"/>
    <property type="molecule type" value="Genomic_DNA"/>
</dbReference>
<dbReference type="EMBL" id="AE004091">
    <property type="protein sequence ID" value="AAG08396.1"/>
    <property type="molecule type" value="Genomic_DNA"/>
</dbReference>
<dbReference type="PIR" id="G83020">
    <property type="entry name" value="G83020"/>
</dbReference>
<dbReference type="RefSeq" id="NP_253698.1">
    <property type="nucleotide sequence ID" value="NC_002516.2"/>
</dbReference>
<dbReference type="RefSeq" id="WP_003095779.1">
    <property type="nucleotide sequence ID" value="NZ_QZGE01000002.1"/>
</dbReference>
<dbReference type="SMR" id="Q9HUF5"/>
<dbReference type="FunCoup" id="Q9HUF5">
    <property type="interactions" value="268"/>
</dbReference>
<dbReference type="STRING" id="208964.PA5011"/>
<dbReference type="CAZy" id="GT9">
    <property type="family name" value="Glycosyltransferase Family 9"/>
</dbReference>
<dbReference type="PaxDb" id="208964-PA5011"/>
<dbReference type="GeneID" id="881533"/>
<dbReference type="KEGG" id="pae:PA5011"/>
<dbReference type="PATRIC" id="fig|208964.12.peg.5251"/>
<dbReference type="PseudoCAP" id="PA5011"/>
<dbReference type="HOGENOM" id="CLU_038371_6_0_6"/>
<dbReference type="InParanoid" id="Q9HUF5"/>
<dbReference type="OrthoDB" id="9767552at2"/>
<dbReference type="PhylomeDB" id="Q9HUF5"/>
<dbReference type="BioCyc" id="PAER208964:G1FZ6-5127-MONOMER"/>
<dbReference type="UniPathway" id="UPA00958"/>
<dbReference type="Proteomes" id="UP000002438">
    <property type="component" value="Chromosome"/>
</dbReference>
<dbReference type="GO" id="GO:0005829">
    <property type="term" value="C:cytosol"/>
    <property type="evidence" value="ECO:0000318"/>
    <property type="project" value="GO_Central"/>
</dbReference>
<dbReference type="GO" id="GO:0005886">
    <property type="term" value="C:plasma membrane"/>
    <property type="evidence" value="ECO:0007669"/>
    <property type="project" value="UniProtKB-SubCell"/>
</dbReference>
<dbReference type="GO" id="GO:0008713">
    <property type="term" value="F:ADP-heptose-lipopolysaccharide heptosyltransferase activity"/>
    <property type="evidence" value="ECO:0000318"/>
    <property type="project" value="GO_Central"/>
</dbReference>
<dbReference type="GO" id="GO:0071968">
    <property type="term" value="F:lipid A-core heptosyltransferase activity"/>
    <property type="evidence" value="ECO:0000250"/>
    <property type="project" value="PseudoCAP"/>
</dbReference>
<dbReference type="GO" id="GO:0009244">
    <property type="term" value="P:lipopolysaccharide core region biosynthetic process"/>
    <property type="evidence" value="ECO:0000314"/>
    <property type="project" value="PseudoCAP"/>
</dbReference>
<dbReference type="CDD" id="cd03789">
    <property type="entry name" value="GT9_LPS_heptosyltransferase"/>
    <property type="match status" value="1"/>
</dbReference>
<dbReference type="FunFam" id="3.40.50.2000:FF:000106">
    <property type="entry name" value="Lipopolysaccharide heptosyltransferase 1"/>
    <property type="match status" value="1"/>
</dbReference>
<dbReference type="Gene3D" id="3.40.50.2000">
    <property type="entry name" value="Glycogen Phosphorylase B"/>
    <property type="match status" value="2"/>
</dbReference>
<dbReference type="InterPro" id="IPR002201">
    <property type="entry name" value="Glyco_trans_9"/>
</dbReference>
<dbReference type="InterPro" id="IPR011908">
    <property type="entry name" value="LipoPS_heptosylTferase-I"/>
</dbReference>
<dbReference type="InterPro" id="IPR051199">
    <property type="entry name" value="LPS_LOS_Heptosyltrfase"/>
</dbReference>
<dbReference type="NCBIfam" id="TIGR02193">
    <property type="entry name" value="heptsyl_trn_I"/>
    <property type="match status" value="1"/>
</dbReference>
<dbReference type="PANTHER" id="PTHR30160:SF19">
    <property type="entry name" value="LIPOPOLYSACCHARIDE HEPTOSYLTRANSFERASE 1"/>
    <property type="match status" value="1"/>
</dbReference>
<dbReference type="PANTHER" id="PTHR30160">
    <property type="entry name" value="TETRAACYLDISACCHARIDE 4'-KINASE-RELATED"/>
    <property type="match status" value="1"/>
</dbReference>
<dbReference type="Pfam" id="PF01075">
    <property type="entry name" value="Glyco_transf_9"/>
    <property type="match status" value="1"/>
</dbReference>
<dbReference type="SUPFAM" id="SSF53756">
    <property type="entry name" value="UDP-Glycosyltransferase/glycogen phosphorylase"/>
    <property type="match status" value="1"/>
</dbReference>
<feature type="chain" id="PRO_0000459132" description="Lipopolysaccharide heptosyltransferase 1">
    <location>
        <begin position="1"/>
        <end position="355"/>
    </location>
</feature>
<feature type="binding site" evidence="1">
    <location>
        <position position="186"/>
    </location>
    <ligand>
        <name>ADP-L-glycero-beta-D-manno-heptose</name>
        <dbReference type="ChEBI" id="CHEBI:61506"/>
    </ligand>
</feature>
<feature type="binding site" evidence="1">
    <location>
        <position position="187"/>
    </location>
    <ligand>
        <name>ADP-L-glycero-beta-D-manno-heptose</name>
        <dbReference type="ChEBI" id="CHEBI:61506"/>
    </ligand>
</feature>
<feature type="binding site" evidence="1">
    <location>
        <position position="191"/>
    </location>
    <ligand>
        <name>ADP-L-glycero-beta-D-manno-heptose</name>
        <dbReference type="ChEBI" id="CHEBI:61506"/>
    </ligand>
</feature>
<feature type="binding site" evidence="1">
    <location>
        <position position="221"/>
    </location>
    <ligand>
        <name>ADP-L-glycero-beta-D-manno-heptose</name>
        <dbReference type="ChEBI" id="CHEBI:61506"/>
    </ligand>
</feature>
<feature type="binding site" evidence="1">
    <location>
        <position position="260"/>
    </location>
    <ligand>
        <name>ADP-L-glycero-beta-D-manno-heptose</name>
        <dbReference type="ChEBI" id="CHEBI:61506"/>
    </ligand>
</feature>
<feature type="binding site" evidence="1">
    <location>
        <position position="261"/>
    </location>
    <ligand>
        <name>ADP-L-glycero-beta-D-manno-heptose</name>
        <dbReference type="ChEBI" id="CHEBI:61506"/>
    </ligand>
</feature>
<feature type="binding site" evidence="1">
    <location>
        <position position="262"/>
    </location>
    <ligand>
        <name>ADP-L-glycero-beta-D-manno-heptose</name>
        <dbReference type="ChEBI" id="CHEBI:61506"/>
    </ligand>
</feature>
<feature type="binding site" evidence="1">
    <location>
        <position position="265"/>
    </location>
    <ligand>
        <name>ADP-L-glycero-beta-D-manno-heptose</name>
        <dbReference type="ChEBI" id="CHEBI:61506"/>
    </ligand>
</feature>
<feature type="sequence conflict" description="In Ref. 1; AAC45365." evidence="5" ref="1">
    <original>D</original>
    <variation>E</variation>
    <location>
        <position position="162"/>
    </location>
</feature>
<proteinExistence type="inferred from homology"/>
<reference key="1">
    <citation type="journal article" date="1997" name="J. Bacteriol.">
        <title>Isolation and characterization of two genes, waaC (rfaC) and waaF (rfaF), involved in Pseudomonas aeruginosa serotype O5 inner-core biosynthesis.</title>
        <authorList>
            <person name="de Kievit T.R."/>
            <person name="Lam J.S."/>
        </authorList>
    </citation>
    <scope>NUCLEOTIDE SEQUENCE [GENOMIC DNA]</scope>
    <scope>FUNCTION</scope>
    <source>
        <strain>ATCC 15692 / DSM 22644 / CIP 104116 / JCM 14847 / LMG 12228 / 1C / PRS 101 / PAO1</strain>
    </source>
</reference>
<reference key="2">
    <citation type="journal article" date="2000" name="Nature">
        <title>Complete genome sequence of Pseudomonas aeruginosa PAO1, an opportunistic pathogen.</title>
        <authorList>
            <person name="Stover C.K."/>
            <person name="Pham X.-Q.T."/>
            <person name="Erwin A.L."/>
            <person name="Mizoguchi S.D."/>
            <person name="Warrener P."/>
            <person name="Hickey M.J."/>
            <person name="Brinkman F.S.L."/>
            <person name="Hufnagle W.O."/>
            <person name="Kowalik D.J."/>
            <person name="Lagrou M."/>
            <person name="Garber R.L."/>
            <person name="Goltry L."/>
            <person name="Tolentino E."/>
            <person name="Westbrock-Wadman S."/>
            <person name="Yuan Y."/>
            <person name="Brody L.L."/>
            <person name="Coulter S.N."/>
            <person name="Folger K.R."/>
            <person name="Kas A."/>
            <person name="Larbig K."/>
            <person name="Lim R.M."/>
            <person name="Smith K.A."/>
            <person name="Spencer D.H."/>
            <person name="Wong G.K.-S."/>
            <person name="Wu Z."/>
            <person name="Paulsen I.T."/>
            <person name="Reizer J."/>
            <person name="Saier M.H. Jr."/>
            <person name="Hancock R.E.W."/>
            <person name="Lory S."/>
            <person name="Olson M.V."/>
        </authorList>
    </citation>
    <scope>NUCLEOTIDE SEQUENCE [LARGE SCALE GENOMIC DNA]</scope>
    <source>
        <strain>ATCC 15692 / DSM 22644 / CIP 104116 / JCM 14847 / LMG 12228 / 1C / PRS 101 / PAO1</strain>
    </source>
</reference>
<organism>
    <name type="scientific">Pseudomonas aeruginosa (strain ATCC 15692 / DSM 22644 / CIP 104116 / JCM 14847 / LMG 12228 / 1C / PRS 101 / PAO1)</name>
    <dbReference type="NCBI Taxonomy" id="208964"/>
    <lineage>
        <taxon>Bacteria</taxon>
        <taxon>Pseudomonadati</taxon>
        <taxon>Pseudomonadota</taxon>
        <taxon>Gammaproteobacteria</taxon>
        <taxon>Pseudomonadales</taxon>
        <taxon>Pseudomonadaceae</taxon>
        <taxon>Pseudomonas</taxon>
    </lineage>
</organism>
<name>WAAC_PSEAE</name>
<comment type="function">
    <text evidence="2 3">Glycosyltransferase involved in the biosynthesis of the core oligosaccharide region of lipopolysaccharide (LPS) (PubMed:9171387). Catalyzes the addition of the first heptose unit to one 3-deoxy-D-manno-octulosonic acid (Kdo) residue of the Kdo2-lipid A module (By similarity).</text>
</comment>
<comment type="catalytic activity">
    <reaction evidence="2">
        <text>an alpha-Kdo-(2-&gt;4)-alpha-Kdo-(2-&gt;6)-lipid A + ADP-L-glycero-beta-D-manno-heptose = an L-alpha-D-Hep-(1-&gt;5)-[alpha-Kdo-(2-&gt;4)]-alpha-Kdo-(2-&gt;6)-lipid A + ADP + H(+)</text>
        <dbReference type="Rhea" id="RHEA:74067"/>
        <dbReference type="ChEBI" id="CHEBI:15378"/>
        <dbReference type="ChEBI" id="CHEBI:61506"/>
        <dbReference type="ChEBI" id="CHEBI:176431"/>
        <dbReference type="ChEBI" id="CHEBI:193068"/>
        <dbReference type="ChEBI" id="CHEBI:456216"/>
        <dbReference type="EC" id="2.4.99.23"/>
    </reaction>
</comment>
<comment type="pathway">
    <text evidence="2">Bacterial outer membrane biogenesis; LPS core biosynthesis.</text>
</comment>
<comment type="subcellular location">
    <subcellularLocation>
        <location evidence="2">Cell inner membrane</location>
        <topology evidence="2">Peripheral membrane protein</topology>
        <orientation evidence="2">Cytoplasmic side</orientation>
    </subcellularLocation>
</comment>
<comment type="miscellaneous">
    <text evidence="3">Can complement a S.typhimurium mutant lacking this gene.</text>
</comment>
<comment type="similarity">
    <text evidence="5">Belongs to the glycosyltransferase 9 family.</text>
</comment>
<keyword id="KW-0997">Cell inner membrane</keyword>
<keyword id="KW-1003">Cell membrane</keyword>
<keyword id="KW-0328">Glycosyltransferase</keyword>
<keyword id="KW-0448">Lipopolysaccharide biosynthesis</keyword>
<keyword id="KW-0472">Membrane</keyword>
<keyword id="KW-1185">Reference proteome</keyword>
<keyword id="KW-0808">Transferase</keyword>
<protein>
    <recommendedName>
        <fullName evidence="5">Lipopolysaccharide heptosyltransferase 1</fullName>
        <ecNumber evidence="2">2.4.99.23</ecNumber>
    </recommendedName>
    <alternativeName>
        <fullName evidence="2">ADP-heptose:lipopolysaccharide heptosyltransferase I</fullName>
        <shortName evidence="2">ADP-heptose:LPS heptosyltransferase I</shortName>
        <shortName evidence="2">Heptosyltransferase I</shortName>
    </alternativeName>
</protein>
<accession>Q9HUF5</accession>
<accession>O05195</accession>